<sequence length="248" mass="27586">MTLKRIFCAALALIVLQSVASAVDYCRLSCPEGRDHVGCRNAGFGAHCGSNPQTPKLHQEHIKMVLQKTNWLRGVVAEGSFCYPKAARMPVLVWDDELANLAALHTKGCVTETNKCRSTERFHSPGQSSYEISGDTLPSAMDILNFALRDWYLQKDNLTREDIGSYPAGEDKGLKNMANLISDKVTAIGCGLAQWRKENYKGAFHCSLLFIERSRSSIYQRGDNFATNCLKTHPTYRAGVLSDEQYSN</sequence>
<keyword id="KW-1217">Cell adhesion impairing toxin</keyword>
<keyword id="KW-1199">Hemostasis impairing toxin</keyword>
<keyword id="KW-1201">Platelet aggregation inhibiting toxin</keyword>
<keyword id="KW-0964">Secreted</keyword>
<keyword id="KW-0732">Signal</keyword>
<keyword id="KW-0800">Toxin</keyword>
<organism>
    <name type="scientific">Tabanus yao</name>
    <name type="common">Horsefly</name>
    <dbReference type="NCBI Taxonomy" id="485572"/>
    <lineage>
        <taxon>Eukaryota</taxon>
        <taxon>Metazoa</taxon>
        <taxon>Ecdysozoa</taxon>
        <taxon>Arthropoda</taxon>
        <taxon>Hexapoda</taxon>
        <taxon>Insecta</taxon>
        <taxon>Pterygota</taxon>
        <taxon>Neoptera</taxon>
        <taxon>Endopterygota</taxon>
        <taxon>Diptera</taxon>
        <taxon>Brachycera</taxon>
        <taxon>Tabanomorpha</taxon>
        <taxon>Tabanoidea</taxon>
        <taxon>Tabanidae</taxon>
        <taxon>Tabanus</taxon>
    </lineage>
</organism>
<protein>
    <recommendedName>
        <fullName evidence="3">Tabinhibitin 10</fullName>
    </recommendedName>
</protein>
<accession>C8YJG5</accession>
<feature type="signal peptide" evidence="2">
    <location>
        <begin position="1"/>
        <end position="22"/>
    </location>
</feature>
<feature type="chain" id="PRO_5002994500" description="Tabinhibitin 10" evidence="1">
    <location>
        <begin position="23"/>
        <end position="248"/>
    </location>
</feature>
<feature type="domain" description="SCP" evidence="2">
    <location>
        <begin position="66"/>
        <end position="208"/>
    </location>
</feature>
<feature type="short sequence motif" description="Cell attachment site" evidence="5">
    <location>
        <begin position="221"/>
        <end position="223"/>
    </location>
</feature>
<name>INHA_TABYA</name>
<proteinExistence type="evidence at transcript level"/>
<reference evidence="6" key="1">
    <citation type="journal article" date="2009" name="Mol. Cell. Proteomics">
        <title>Anti-thrombosis repertoire of blood-feeding horsefly salivary glands.</title>
        <authorList>
            <person name="Ma D."/>
            <person name="Wang Y."/>
            <person name="Yang H."/>
            <person name="Wu J."/>
            <person name="An S."/>
            <person name="Gao L."/>
            <person name="Xu X."/>
            <person name="Lai R."/>
        </authorList>
    </citation>
    <scope>NUCLEOTIDE SEQUENCE [MRNA]</scope>
    <source>
        <tissue>Salivary gland</tissue>
    </source>
</reference>
<dbReference type="EMBL" id="FJ477726">
    <property type="protein sequence ID" value="ACT33297.1"/>
    <property type="molecule type" value="mRNA"/>
</dbReference>
<dbReference type="SMR" id="C8YJG5"/>
<dbReference type="GO" id="GO:0005576">
    <property type="term" value="C:extracellular region"/>
    <property type="evidence" value="ECO:0007669"/>
    <property type="project" value="UniProtKB-SubCell"/>
</dbReference>
<dbReference type="GO" id="GO:0090729">
    <property type="term" value="F:toxin activity"/>
    <property type="evidence" value="ECO:0007669"/>
    <property type="project" value="UniProtKB-KW"/>
</dbReference>
<dbReference type="CDD" id="cd05380">
    <property type="entry name" value="CAP_euk"/>
    <property type="match status" value="1"/>
</dbReference>
<dbReference type="Gene3D" id="3.40.33.10">
    <property type="entry name" value="CAP"/>
    <property type="match status" value="1"/>
</dbReference>
<dbReference type="InterPro" id="IPR014044">
    <property type="entry name" value="CAP_dom"/>
</dbReference>
<dbReference type="InterPro" id="IPR035940">
    <property type="entry name" value="CAP_sf"/>
</dbReference>
<dbReference type="InterPro" id="IPR034763">
    <property type="entry name" value="P14a_insect"/>
</dbReference>
<dbReference type="Pfam" id="PF00188">
    <property type="entry name" value="CAP"/>
    <property type="match status" value="1"/>
</dbReference>
<dbReference type="PIRSF" id="PIRSF038921">
    <property type="entry name" value="P14a"/>
    <property type="match status" value="1"/>
</dbReference>
<dbReference type="SMART" id="SM00198">
    <property type="entry name" value="SCP"/>
    <property type="match status" value="1"/>
</dbReference>
<dbReference type="SUPFAM" id="SSF55797">
    <property type="entry name" value="PR-1-like"/>
    <property type="match status" value="1"/>
</dbReference>
<evidence type="ECO:0000250" key="1">
    <source>
        <dbReference type="UniProtKB" id="C8YJ98"/>
    </source>
</evidence>
<evidence type="ECO:0000255" key="2"/>
<evidence type="ECO:0000303" key="3">
    <source>
    </source>
</evidence>
<evidence type="ECO:0000305" key="4"/>
<evidence type="ECO:0000305" key="5">
    <source>
    </source>
</evidence>
<evidence type="ECO:0000312" key="6">
    <source>
        <dbReference type="EMBL" id="ACT33297.1"/>
    </source>
</evidence>
<comment type="function">
    <text evidence="1">Inhibits platelet aggregation induced by all agonists tested (ADP, arachidonic acid, the thromboxane A2 analog U46619, thrombin, and snake venom snaclecs (TMVA that activates platelet through GPIB, and stejnulxin that specifically acts through GPVI (GP6))) (By similarity). May act by competing with fibrinogen for binding to glycoprotein IIb/IIIa (ITGA2B/ITGB3) (By similarity).</text>
</comment>
<comment type="subcellular location">
    <subcellularLocation>
        <location evidence="1">Secreted</location>
    </subcellularLocation>
</comment>
<comment type="tissue specificity">
    <text evidence="1">Expressed in salivary glands.</text>
</comment>
<comment type="similarity">
    <text evidence="4">Belongs to the CRISP family.</text>
</comment>